<organism>
    <name type="scientific">Gluconobacter oxydans (strain 621H)</name>
    <name type="common">Gluconobacter suboxydans</name>
    <dbReference type="NCBI Taxonomy" id="290633"/>
    <lineage>
        <taxon>Bacteria</taxon>
        <taxon>Pseudomonadati</taxon>
        <taxon>Pseudomonadota</taxon>
        <taxon>Alphaproteobacteria</taxon>
        <taxon>Acetobacterales</taxon>
        <taxon>Acetobacteraceae</taxon>
        <taxon>Gluconobacter</taxon>
    </lineage>
</organism>
<proteinExistence type="inferred from homology"/>
<reference key="1">
    <citation type="journal article" date="2005" name="Nat. Biotechnol.">
        <title>Complete genome sequence of the acetic acid bacterium Gluconobacter oxydans.</title>
        <authorList>
            <person name="Prust C."/>
            <person name="Hoffmeister M."/>
            <person name="Liesegang H."/>
            <person name="Wiezer A."/>
            <person name="Fricke W.F."/>
            <person name="Ehrenreich A."/>
            <person name="Gottschalk G."/>
            <person name="Deppenmeier U."/>
        </authorList>
    </citation>
    <scope>NUCLEOTIDE SEQUENCE [LARGE SCALE GENOMIC DNA]</scope>
    <source>
        <strain>621H</strain>
    </source>
</reference>
<comment type="function">
    <text evidence="1">Allows the formation of correctly charged Asn-tRNA(Asn) or Gln-tRNA(Gln) through the transamidation of misacylated Asp-tRNA(Asn) or Glu-tRNA(Gln) in organisms which lack either or both of asparaginyl-tRNA or glutaminyl-tRNA synthetases. The reaction takes place in the presence of glutamine and ATP through an activated phospho-Asp-tRNA(Asn) or phospho-Glu-tRNA(Gln).</text>
</comment>
<comment type="catalytic activity">
    <reaction evidence="1">
        <text>L-glutamyl-tRNA(Gln) + L-glutamine + ATP + H2O = L-glutaminyl-tRNA(Gln) + L-glutamate + ADP + phosphate + H(+)</text>
        <dbReference type="Rhea" id="RHEA:17521"/>
        <dbReference type="Rhea" id="RHEA-COMP:9681"/>
        <dbReference type="Rhea" id="RHEA-COMP:9684"/>
        <dbReference type="ChEBI" id="CHEBI:15377"/>
        <dbReference type="ChEBI" id="CHEBI:15378"/>
        <dbReference type="ChEBI" id="CHEBI:29985"/>
        <dbReference type="ChEBI" id="CHEBI:30616"/>
        <dbReference type="ChEBI" id="CHEBI:43474"/>
        <dbReference type="ChEBI" id="CHEBI:58359"/>
        <dbReference type="ChEBI" id="CHEBI:78520"/>
        <dbReference type="ChEBI" id="CHEBI:78521"/>
        <dbReference type="ChEBI" id="CHEBI:456216"/>
    </reaction>
</comment>
<comment type="catalytic activity">
    <reaction evidence="1">
        <text>L-aspartyl-tRNA(Asn) + L-glutamine + ATP + H2O = L-asparaginyl-tRNA(Asn) + L-glutamate + ADP + phosphate + 2 H(+)</text>
        <dbReference type="Rhea" id="RHEA:14513"/>
        <dbReference type="Rhea" id="RHEA-COMP:9674"/>
        <dbReference type="Rhea" id="RHEA-COMP:9677"/>
        <dbReference type="ChEBI" id="CHEBI:15377"/>
        <dbReference type="ChEBI" id="CHEBI:15378"/>
        <dbReference type="ChEBI" id="CHEBI:29985"/>
        <dbReference type="ChEBI" id="CHEBI:30616"/>
        <dbReference type="ChEBI" id="CHEBI:43474"/>
        <dbReference type="ChEBI" id="CHEBI:58359"/>
        <dbReference type="ChEBI" id="CHEBI:78515"/>
        <dbReference type="ChEBI" id="CHEBI:78516"/>
        <dbReference type="ChEBI" id="CHEBI:456216"/>
    </reaction>
</comment>
<comment type="subunit">
    <text evidence="1">Heterotrimer of A, B and C subunits.</text>
</comment>
<comment type="similarity">
    <text evidence="1">Belongs to the GatB/GatE family. GatB subfamily.</text>
</comment>
<keyword id="KW-0067">ATP-binding</keyword>
<keyword id="KW-0436">Ligase</keyword>
<keyword id="KW-0547">Nucleotide-binding</keyword>
<keyword id="KW-0648">Protein biosynthesis</keyword>
<keyword id="KW-1185">Reference proteome</keyword>
<feature type="chain" id="PRO_0000241228" description="Aspartyl/glutamyl-tRNA(Asn/Gln) amidotransferase subunit B">
    <location>
        <begin position="1"/>
        <end position="485"/>
    </location>
</feature>
<accession>Q5FND4</accession>
<dbReference type="EC" id="6.3.5.-" evidence="1"/>
<dbReference type="EMBL" id="CP000009">
    <property type="protein sequence ID" value="AAW62113.1"/>
    <property type="molecule type" value="Genomic_DNA"/>
</dbReference>
<dbReference type="RefSeq" id="WP_011253882.1">
    <property type="nucleotide sequence ID" value="NC_006677.1"/>
</dbReference>
<dbReference type="SMR" id="Q5FND4"/>
<dbReference type="STRING" id="290633.GOX2382"/>
<dbReference type="KEGG" id="gox:GOX2382"/>
<dbReference type="eggNOG" id="COG0064">
    <property type="taxonomic scope" value="Bacteria"/>
</dbReference>
<dbReference type="HOGENOM" id="CLU_019240_1_1_5"/>
<dbReference type="Proteomes" id="UP000006375">
    <property type="component" value="Chromosome"/>
</dbReference>
<dbReference type="GO" id="GO:0050566">
    <property type="term" value="F:asparaginyl-tRNA synthase (glutamine-hydrolyzing) activity"/>
    <property type="evidence" value="ECO:0007669"/>
    <property type="project" value="RHEA"/>
</dbReference>
<dbReference type="GO" id="GO:0005524">
    <property type="term" value="F:ATP binding"/>
    <property type="evidence" value="ECO:0007669"/>
    <property type="project" value="UniProtKB-KW"/>
</dbReference>
<dbReference type="GO" id="GO:0050567">
    <property type="term" value="F:glutaminyl-tRNA synthase (glutamine-hydrolyzing) activity"/>
    <property type="evidence" value="ECO:0007669"/>
    <property type="project" value="UniProtKB-UniRule"/>
</dbReference>
<dbReference type="GO" id="GO:0070681">
    <property type="term" value="P:glutaminyl-tRNAGln biosynthesis via transamidation"/>
    <property type="evidence" value="ECO:0007669"/>
    <property type="project" value="TreeGrafter"/>
</dbReference>
<dbReference type="GO" id="GO:0006412">
    <property type="term" value="P:translation"/>
    <property type="evidence" value="ECO:0007669"/>
    <property type="project" value="UniProtKB-UniRule"/>
</dbReference>
<dbReference type="FunFam" id="1.10.10.410:FF:000001">
    <property type="entry name" value="Aspartyl/glutamyl-tRNA(Asn/Gln) amidotransferase subunit B"/>
    <property type="match status" value="1"/>
</dbReference>
<dbReference type="Gene3D" id="1.10.10.410">
    <property type="match status" value="1"/>
</dbReference>
<dbReference type="Gene3D" id="1.10.150.380">
    <property type="entry name" value="GatB domain, N-terminal subdomain"/>
    <property type="match status" value="1"/>
</dbReference>
<dbReference type="HAMAP" id="MF_00121">
    <property type="entry name" value="GatB"/>
    <property type="match status" value="1"/>
</dbReference>
<dbReference type="InterPro" id="IPR017959">
    <property type="entry name" value="Asn/Gln-tRNA_amidoTrfase_suB/E"/>
</dbReference>
<dbReference type="InterPro" id="IPR006075">
    <property type="entry name" value="Asn/Gln-tRNA_Trfase_suB/E_cat"/>
</dbReference>
<dbReference type="InterPro" id="IPR018027">
    <property type="entry name" value="Asn/Gln_amidotransferase"/>
</dbReference>
<dbReference type="InterPro" id="IPR003789">
    <property type="entry name" value="Asn/Gln_tRNA_amidoTrase-B-like"/>
</dbReference>
<dbReference type="InterPro" id="IPR004413">
    <property type="entry name" value="GatB"/>
</dbReference>
<dbReference type="InterPro" id="IPR042114">
    <property type="entry name" value="GatB_C_1"/>
</dbReference>
<dbReference type="InterPro" id="IPR023168">
    <property type="entry name" value="GatB_Yqey_C_2"/>
</dbReference>
<dbReference type="InterPro" id="IPR017958">
    <property type="entry name" value="Gln-tRNA_amidoTrfase_suB_CS"/>
</dbReference>
<dbReference type="InterPro" id="IPR014746">
    <property type="entry name" value="Gln_synth/guanido_kin_cat_dom"/>
</dbReference>
<dbReference type="NCBIfam" id="TIGR00133">
    <property type="entry name" value="gatB"/>
    <property type="match status" value="1"/>
</dbReference>
<dbReference type="NCBIfam" id="NF004012">
    <property type="entry name" value="PRK05477.1-2"/>
    <property type="match status" value="1"/>
</dbReference>
<dbReference type="NCBIfam" id="NF004014">
    <property type="entry name" value="PRK05477.1-4"/>
    <property type="match status" value="1"/>
</dbReference>
<dbReference type="NCBIfam" id="NF004015">
    <property type="entry name" value="PRK05477.1-5"/>
    <property type="match status" value="1"/>
</dbReference>
<dbReference type="PANTHER" id="PTHR11659">
    <property type="entry name" value="GLUTAMYL-TRNA GLN AMIDOTRANSFERASE SUBUNIT B MITOCHONDRIAL AND PROKARYOTIC PET112-RELATED"/>
    <property type="match status" value="1"/>
</dbReference>
<dbReference type="PANTHER" id="PTHR11659:SF0">
    <property type="entry name" value="GLUTAMYL-TRNA(GLN) AMIDOTRANSFERASE SUBUNIT B, MITOCHONDRIAL"/>
    <property type="match status" value="1"/>
</dbReference>
<dbReference type="Pfam" id="PF02934">
    <property type="entry name" value="GatB_N"/>
    <property type="match status" value="1"/>
</dbReference>
<dbReference type="Pfam" id="PF02637">
    <property type="entry name" value="GatB_Yqey"/>
    <property type="match status" value="1"/>
</dbReference>
<dbReference type="SMART" id="SM00845">
    <property type="entry name" value="GatB_Yqey"/>
    <property type="match status" value="1"/>
</dbReference>
<dbReference type="SUPFAM" id="SSF89095">
    <property type="entry name" value="GatB/YqeY motif"/>
    <property type="match status" value="1"/>
</dbReference>
<dbReference type="SUPFAM" id="SSF55931">
    <property type="entry name" value="Glutamine synthetase/guanido kinase"/>
    <property type="match status" value="1"/>
</dbReference>
<dbReference type="PROSITE" id="PS01234">
    <property type="entry name" value="GATB"/>
    <property type="match status" value="1"/>
</dbReference>
<gene>
    <name evidence="1" type="primary">gatB</name>
    <name type="ordered locus">GOX2382</name>
</gene>
<protein>
    <recommendedName>
        <fullName evidence="1">Aspartyl/glutamyl-tRNA(Asn/Gln) amidotransferase subunit B</fullName>
        <shortName evidence="1">Asp/Glu-ADT subunit B</shortName>
        <ecNumber evidence="1">6.3.5.-</ecNumber>
    </recommendedName>
</protein>
<sequence>MSYRITGSTGEWEIVVGLEVHAQVVSEAKLFSGASAEYGGEPNTHVSLVDAGFPGMLPVLNRECVAQAVRTGLGLEAEINLFSRFDRKNYFYADLPTGYQISQFAHPIIGKGKVLVDLADGSTREIGVTRLHLEQDAGKSIHDQDPTRSFIDLNRAGVALMEIVSEPDIRSPEEAGAYLRKLRQILRYIGTCDGNMEEGSMRADVNVSVRKPGETEYRTRCEIKNVNSIRFVMMAIEVEAQRQIEVWEAGGTVDQETRLFDHVRGETRSLRSKEDAHDYRYFPDPDLLPLVIEQSWVDELKAALPELPEAKRARLEQEYGVSRYESSVLCVEQAIADFYETVARGADARLAANWMLGDFFAALNRTGRSIEDSPVSAEGLRELLGLISDSTINGKIAKEVLEDMVETGDSASAIVERKGLRQVTDTGAIESAIREILAANSDKVEEYKGGKDKLFGFFVGQTMKAMKGKGNPALVNETLKKLLSE</sequence>
<evidence type="ECO:0000255" key="1">
    <source>
        <dbReference type="HAMAP-Rule" id="MF_00121"/>
    </source>
</evidence>
<name>GATB_GLUOX</name>